<feature type="chain" id="PRO_0000352258" description="PRA1 family protein E">
    <location>
        <begin position="1"/>
        <end position="209"/>
    </location>
</feature>
<feature type="transmembrane region" description="Helical" evidence="2">
    <location>
        <begin position="90"/>
        <end position="110"/>
    </location>
</feature>
<feature type="transmembrane region" description="Helical" evidence="2">
    <location>
        <begin position="132"/>
        <end position="152"/>
    </location>
</feature>
<feature type="transmembrane region" description="Helical" evidence="2">
    <location>
        <begin position="155"/>
        <end position="175"/>
    </location>
</feature>
<feature type="region of interest" description="Disordered" evidence="3">
    <location>
        <begin position="1"/>
        <end position="20"/>
    </location>
</feature>
<feature type="compositionally biased region" description="Gly residues" evidence="3">
    <location>
        <begin position="9"/>
        <end position="19"/>
    </location>
</feature>
<feature type="sequence conflict" description="In Ref. 6; AAM66031." evidence="5" ref="6">
    <original>S</original>
    <variation>P</variation>
    <location>
        <position position="22"/>
    </location>
</feature>
<feature type="sequence conflict" description="In Ref. 6; AAM66031." evidence="5" ref="6">
    <original>G</original>
    <variation>S</variation>
    <location>
        <position position="192"/>
    </location>
</feature>
<sequence>MNQKPPPYGYGGAGGGGVGPSSTSNTTIIGTLSARAKQTTQSMITTLRPWREILDLSALSLPRGYDEAMAHLKHNISYFRGNYALAVLAIVFLGLIYHPMSMIAFIVVFIGWILLYFSRDANDSIVISGKEVDDKIVLVLLSLVTVLALVYTDVGENVLVSLIIGLLIVGAHGAFRNTDDLFLDEESARRGGLVSAGSGNRPPSSYTPI</sequence>
<protein>
    <recommendedName>
        <fullName>PRA1 family protein E</fullName>
        <shortName>AtPRA1.E</shortName>
    </recommendedName>
    <alternativeName>
        <fullName>Prenylated Rab acceptor 4</fullName>
    </alternativeName>
</protein>
<accession>Q9FRR1</accession>
<accession>Q8L9D2</accession>
<keyword id="KW-0967">Endosome</keyword>
<keyword id="KW-0472">Membrane</keyword>
<keyword id="KW-1185">Reference proteome</keyword>
<keyword id="KW-0812">Transmembrane</keyword>
<keyword id="KW-1133">Transmembrane helix</keyword>
<keyword id="KW-0813">Transport</keyword>
<gene>
    <name type="primary">PRA1E</name>
    <name type="synonym">PRA4</name>
    <name type="ordered locus">At1g08770</name>
    <name type="ORF">F22O13.26</name>
</gene>
<proteinExistence type="evidence at protein level"/>
<evidence type="ECO:0000250" key="1"/>
<evidence type="ECO:0000255" key="2"/>
<evidence type="ECO:0000256" key="3">
    <source>
        <dbReference type="SAM" id="MobiDB-lite"/>
    </source>
</evidence>
<evidence type="ECO:0000269" key="4">
    <source>
    </source>
</evidence>
<evidence type="ECO:0000305" key="5"/>
<dbReference type="EMBL" id="AJ249729">
    <property type="protein sequence ID" value="CAC80647.1"/>
    <property type="molecule type" value="mRNA"/>
</dbReference>
<dbReference type="EMBL" id="AC003981">
    <property type="protein sequence ID" value="AAF99767.1"/>
    <property type="molecule type" value="Genomic_DNA"/>
</dbReference>
<dbReference type="EMBL" id="CP002684">
    <property type="protein sequence ID" value="AEE28345.1"/>
    <property type="molecule type" value="Genomic_DNA"/>
</dbReference>
<dbReference type="EMBL" id="BT009715">
    <property type="protein sequence ID" value="AAP88349.1"/>
    <property type="molecule type" value="mRNA"/>
</dbReference>
<dbReference type="EMBL" id="AK227363">
    <property type="protein sequence ID" value="BAE99371.1"/>
    <property type="molecule type" value="mRNA"/>
</dbReference>
<dbReference type="EMBL" id="AY088496">
    <property type="protein sequence ID" value="AAM66031.1"/>
    <property type="molecule type" value="mRNA"/>
</dbReference>
<dbReference type="PIR" id="T00733">
    <property type="entry name" value="T00733"/>
</dbReference>
<dbReference type="RefSeq" id="NP_563826.1">
    <property type="nucleotide sequence ID" value="NM_100751.4"/>
</dbReference>
<dbReference type="BioGRID" id="22640">
    <property type="interactions" value="29"/>
</dbReference>
<dbReference type="FunCoup" id="Q9FRR1">
    <property type="interactions" value="2199"/>
</dbReference>
<dbReference type="IntAct" id="Q9FRR1">
    <property type="interactions" value="29"/>
</dbReference>
<dbReference type="STRING" id="3702.Q9FRR1"/>
<dbReference type="PaxDb" id="3702-AT1G08770.1"/>
<dbReference type="ProteomicsDB" id="234704"/>
<dbReference type="EnsemblPlants" id="AT1G08770.1">
    <property type="protein sequence ID" value="AT1G08770.1"/>
    <property type="gene ID" value="AT1G08770"/>
</dbReference>
<dbReference type="GeneID" id="837399"/>
<dbReference type="Gramene" id="AT1G08770.1">
    <property type="protein sequence ID" value="AT1G08770.1"/>
    <property type="gene ID" value="AT1G08770"/>
</dbReference>
<dbReference type="KEGG" id="ath:AT1G08770"/>
<dbReference type="Araport" id="AT1G08770"/>
<dbReference type="TAIR" id="AT1G08770">
    <property type="gene designation" value="PRA1.E"/>
</dbReference>
<dbReference type="eggNOG" id="KOG3142">
    <property type="taxonomic scope" value="Eukaryota"/>
</dbReference>
<dbReference type="HOGENOM" id="CLU_060198_2_1_1"/>
<dbReference type="InParanoid" id="Q9FRR1"/>
<dbReference type="OMA" id="MNQKPPP"/>
<dbReference type="PhylomeDB" id="Q9FRR1"/>
<dbReference type="PRO" id="PR:Q9FRR1"/>
<dbReference type="Proteomes" id="UP000006548">
    <property type="component" value="Chromosome 1"/>
</dbReference>
<dbReference type="ExpressionAtlas" id="Q9FRR1">
    <property type="expression patterns" value="baseline and differential"/>
</dbReference>
<dbReference type="GO" id="GO:0005783">
    <property type="term" value="C:endoplasmic reticulum"/>
    <property type="evidence" value="ECO:0000314"/>
    <property type="project" value="TAIR"/>
</dbReference>
<dbReference type="GO" id="GO:0010008">
    <property type="term" value="C:endosome membrane"/>
    <property type="evidence" value="ECO:0007669"/>
    <property type="project" value="UniProtKB-SubCell"/>
</dbReference>
<dbReference type="GO" id="GO:0005794">
    <property type="term" value="C:Golgi apparatus"/>
    <property type="evidence" value="ECO:0007005"/>
    <property type="project" value="TAIR"/>
</dbReference>
<dbReference type="GO" id="GO:0016192">
    <property type="term" value="P:vesicle-mediated transport"/>
    <property type="evidence" value="ECO:0000314"/>
    <property type="project" value="TAIR"/>
</dbReference>
<dbReference type="InterPro" id="IPR004895">
    <property type="entry name" value="Prenylated_rab_accept_PRA1"/>
</dbReference>
<dbReference type="PANTHER" id="PTHR19317:SF16">
    <property type="entry name" value="PRA1 FAMILY PROTEIN E"/>
    <property type="match status" value="1"/>
</dbReference>
<dbReference type="PANTHER" id="PTHR19317">
    <property type="entry name" value="PRENYLATED RAB ACCEPTOR 1-RELATED"/>
    <property type="match status" value="1"/>
</dbReference>
<dbReference type="Pfam" id="PF03208">
    <property type="entry name" value="PRA1"/>
    <property type="match status" value="1"/>
</dbReference>
<name>PRA1E_ARATH</name>
<organism>
    <name type="scientific">Arabidopsis thaliana</name>
    <name type="common">Mouse-ear cress</name>
    <dbReference type="NCBI Taxonomy" id="3702"/>
    <lineage>
        <taxon>Eukaryota</taxon>
        <taxon>Viridiplantae</taxon>
        <taxon>Streptophyta</taxon>
        <taxon>Embryophyta</taxon>
        <taxon>Tracheophyta</taxon>
        <taxon>Spermatophyta</taxon>
        <taxon>Magnoliopsida</taxon>
        <taxon>eudicotyledons</taxon>
        <taxon>Gunneridae</taxon>
        <taxon>Pentapetalae</taxon>
        <taxon>rosids</taxon>
        <taxon>malvids</taxon>
        <taxon>Brassicales</taxon>
        <taxon>Brassicaceae</taxon>
        <taxon>Camelineae</taxon>
        <taxon>Arabidopsis</taxon>
    </lineage>
</organism>
<comment type="function">
    <text evidence="1">May be involved in both secretory and endocytic intracellular trafficking in the endosomal/prevacuolar compartments.</text>
</comment>
<comment type="subunit">
    <text evidence="4">Interacts with PRA1B1, PRA1B2, PRA1B3, PRA1B4, PRA1B5 and PRA1B6.</text>
</comment>
<comment type="subcellular location">
    <subcellularLocation>
        <location evidence="4">Endosome membrane</location>
        <topology evidence="4">Multi-pass membrane protein</topology>
    </subcellularLocation>
</comment>
<comment type="tissue specificity">
    <text evidence="4">Expressed in hypocotyls, roots, lateral roots, columella cells, leaves and shoot apex.</text>
</comment>
<comment type="similarity">
    <text evidence="5">Belongs to the PRA1 family.</text>
</comment>
<reference key="1">
    <citation type="submission" date="1999-09" db="EMBL/GenBank/DDBJ databases">
        <title>Isolation and characterization of members of a new protein family from Arabidopsis thaliana that specifically interact with prenylated Rab proteins and SNAREs.</title>
        <authorList>
            <person name="Pay A."/>
            <person name="Nagy F."/>
            <person name="Merkle T."/>
        </authorList>
    </citation>
    <scope>NUCLEOTIDE SEQUENCE [MRNA]</scope>
    <source>
        <strain>cv. Columbia</strain>
    </source>
</reference>
<reference key="2">
    <citation type="journal article" date="2000" name="Nature">
        <title>Sequence and analysis of chromosome 1 of the plant Arabidopsis thaliana.</title>
        <authorList>
            <person name="Theologis A."/>
            <person name="Ecker J.R."/>
            <person name="Palm C.J."/>
            <person name="Federspiel N.A."/>
            <person name="Kaul S."/>
            <person name="White O."/>
            <person name="Alonso J."/>
            <person name="Altafi H."/>
            <person name="Araujo R."/>
            <person name="Bowman C.L."/>
            <person name="Brooks S.Y."/>
            <person name="Buehler E."/>
            <person name="Chan A."/>
            <person name="Chao Q."/>
            <person name="Chen H."/>
            <person name="Cheuk R.F."/>
            <person name="Chin C.W."/>
            <person name="Chung M.K."/>
            <person name="Conn L."/>
            <person name="Conway A.B."/>
            <person name="Conway A.R."/>
            <person name="Creasy T.H."/>
            <person name="Dewar K."/>
            <person name="Dunn P."/>
            <person name="Etgu P."/>
            <person name="Feldblyum T.V."/>
            <person name="Feng J.-D."/>
            <person name="Fong B."/>
            <person name="Fujii C.Y."/>
            <person name="Gill J.E."/>
            <person name="Goldsmith A.D."/>
            <person name="Haas B."/>
            <person name="Hansen N.F."/>
            <person name="Hughes B."/>
            <person name="Huizar L."/>
            <person name="Hunter J.L."/>
            <person name="Jenkins J."/>
            <person name="Johnson-Hopson C."/>
            <person name="Khan S."/>
            <person name="Khaykin E."/>
            <person name="Kim C.J."/>
            <person name="Koo H.L."/>
            <person name="Kremenetskaia I."/>
            <person name="Kurtz D.B."/>
            <person name="Kwan A."/>
            <person name="Lam B."/>
            <person name="Langin-Hooper S."/>
            <person name="Lee A."/>
            <person name="Lee J.M."/>
            <person name="Lenz C.A."/>
            <person name="Li J.H."/>
            <person name="Li Y.-P."/>
            <person name="Lin X."/>
            <person name="Liu S.X."/>
            <person name="Liu Z.A."/>
            <person name="Luros J.S."/>
            <person name="Maiti R."/>
            <person name="Marziali A."/>
            <person name="Militscher J."/>
            <person name="Miranda M."/>
            <person name="Nguyen M."/>
            <person name="Nierman W.C."/>
            <person name="Osborne B.I."/>
            <person name="Pai G."/>
            <person name="Peterson J."/>
            <person name="Pham P.K."/>
            <person name="Rizzo M."/>
            <person name="Rooney T."/>
            <person name="Rowley D."/>
            <person name="Sakano H."/>
            <person name="Salzberg S.L."/>
            <person name="Schwartz J.R."/>
            <person name="Shinn P."/>
            <person name="Southwick A.M."/>
            <person name="Sun H."/>
            <person name="Tallon L.J."/>
            <person name="Tambunga G."/>
            <person name="Toriumi M.J."/>
            <person name="Town C.D."/>
            <person name="Utterback T."/>
            <person name="Van Aken S."/>
            <person name="Vaysberg M."/>
            <person name="Vysotskaia V.S."/>
            <person name="Walker M."/>
            <person name="Wu D."/>
            <person name="Yu G."/>
            <person name="Fraser C.M."/>
            <person name="Venter J.C."/>
            <person name="Davis R.W."/>
        </authorList>
    </citation>
    <scope>NUCLEOTIDE SEQUENCE [LARGE SCALE GENOMIC DNA]</scope>
    <source>
        <strain>cv. Columbia</strain>
    </source>
</reference>
<reference key="3">
    <citation type="journal article" date="2017" name="Plant J.">
        <title>Araport11: a complete reannotation of the Arabidopsis thaliana reference genome.</title>
        <authorList>
            <person name="Cheng C.Y."/>
            <person name="Krishnakumar V."/>
            <person name="Chan A.P."/>
            <person name="Thibaud-Nissen F."/>
            <person name="Schobel S."/>
            <person name="Town C.D."/>
        </authorList>
    </citation>
    <scope>GENOME REANNOTATION</scope>
    <source>
        <strain>cv. Columbia</strain>
    </source>
</reference>
<reference key="4">
    <citation type="journal article" date="2003" name="Science">
        <title>Empirical analysis of transcriptional activity in the Arabidopsis genome.</title>
        <authorList>
            <person name="Yamada K."/>
            <person name="Lim J."/>
            <person name="Dale J.M."/>
            <person name="Chen H."/>
            <person name="Shinn P."/>
            <person name="Palm C.J."/>
            <person name="Southwick A.M."/>
            <person name="Wu H.C."/>
            <person name="Kim C.J."/>
            <person name="Nguyen M."/>
            <person name="Pham P.K."/>
            <person name="Cheuk R.F."/>
            <person name="Karlin-Newmann G."/>
            <person name="Liu S.X."/>
            <person name="Lam B."/>
            <person name="Sakano H."/>
            <person name="Wu T."/>
            <person name="Yu G."/>
            <person name="Miranda M."/>
            <person name="Quach H.L."/>
            <person name="Tripp M."/>
            <person name="Chang C.H."/>
            <person name="Lee J.M."/>
            <person name="Toriumi M.J."/>
            <person name="Chan M.M."/>
            <person name="Tang C.C."/>
            <person name="Onodera C.S."/>
            <person name="Deng J.M."/>
            <person name="Akiyama K."/>
            <person name="Ansari Y."/>
            <person name="Arakawa T."/>
            <person name="Banh J."/>
            <person name="Banno F."/>
            <person name="Bowser L."/>
            <person name="Brooks S.Y."/>
            <person name="Carninci P."/>
            <person name="Chao Q."/>
            <person name="Choy N."/>
            <person name="Enju A."/>
            <person name="Goldsmith A.D."/>
            <person name="Gurjal M."/>
            <person name="Hansen N.F."/>
            <person name="Hayashizaki Y."/>
            <person name="Johnson-Hopson C."/>
            <person name="Hsuan V.W."/>
            <person name="Iida K."/>
            <person name="Karnes M."/>
            <person name="Khan S."/>
            <person name="Koesema E."/>
            <person name="Ishida J."/>
            <person name="Jiang P.X."/>
            <person name="Jones T."/>
            <person name="Kawai J."/>
            <person name="Kamiya A."/>
            <person name="Meyers C."/>
            <person name="Nakajima M."/>
            <person name="Narusaka M."/>
            <person name="Seki M."/>
            <person name="Sakurai T."/>
            <person name="Satou M."/>
            <person name="Tamse R."/>
            <person name="Vaysberg M."/>
            <person name="Wallender E.K."/>
            <person name="Wong C."/>
            <person name="Yamamura Y."/>
            <person name="Yuan S."/>
            <person name="Shinozaki K."/>
            <person name="Davis R.W."/>
            <person name="Theologis A."/>
            <person name="Ecker J.R."/>
        </authorList>
    </citation>
    <scope>NUCLEOTIDE SEQUENCE [LARGE SCALE MRNA]</scope>
    <source>
        <strain>cv. Columbia</strain>
    </source>
</reference>
<reference key="5">
    <citation type="submission" date="2006-07" db="EMBL/GenBank/DDBJ databases">
        <title>Large-scale analysis of RIKEN Arabidopsis full-length (RAFL) cDNAs.</title>
        <authorList>
            <person name="Totoki Y."/>
            <person name="Seki M."/>
            <person name="Ishida J."/>
            <person name="Nakajima M."/>
            <person name="Enju A."/>
            <person name="Kamiya A."/>
            <person name="Narusaka M."/>
            <person name="Shin-i T."/>
            <person name="Nakagawa M."/>
            <person name="Sakamoto N."/>
            <person name="Oishi K."/>
            <person name="Kohara Y."/>
            <person name="Kobayashi M."/>
            <person name="Toyoda A."/>
            <person name="Sakaki Y."/>
            <person name="Sakurai T."/>
            <person name="Iida K."/>
            <person name="Akiyama K."/>
            <person name="Satou M."/>
            <person name="Toyoda T."/>
            <person name="Konagaya A."/>
            <person name="Carninci P."/>
            <person name="Kawai J."/>
            <person name="Hayashizaki Y."/>
            <person name="Shinozaki K."/>
        </authorList>
    </citation>
    <scope>NUCLEOTIDE SEQUENCE [LARGE SCALE MRNA]</scope>
    <source>
        <strain>cv. Columbia</strain>
    </source>
</reference>
<reference key="6">
    <citation type="submission" date="2002-03" db="EMBL/GenBank/DDBJ databases">
        <title>Full-length cDNA from Arabidopsis thaliana.</title>
        <authorList>
            <person name="Brover V.V."/>
            <person name="Troukhan M.E."/>
            <person name="Alexandrov N.A."/>
            <person name="Lu Y.-P."/>
            <person name="Flavell R.B."/>
            <person name="Feldmann K.A."/>
        </authorList>
    </citation>
    <scope>NUCLEOTIDE SEQUENCE [LARGE SCALE MRNA]</scope>
</reference>
<reference key="7">
    <citation type="journal article" date="2008" name="Plant Physiol.">
        <title>The PRA1 gene family in Arabidopsis.</title>
        <authorList>
            <person name="Alvim Kamei C.L."/>
            <person name="Boruc J."/>
            <person name="Vandepoele K."/>
            <person name="Van den Daele H."/>
            <person name="Maes S."/>
            <person name="Russinova E."/>
            <person name="Inze D."/>
            <person name="de Veylder L."/>
        </authorList>
    </citation>
    <scope>SUBCELLULAR LOCATION</scope>
    <scope>TISSUE SPECIFICITY</scope>
    <scope>INTERACTION WITH PRA1B1 PRA1B2; PRA1B3; PRA1B4; PRA1B5 AND PRA1B6</scope>
    <scope>GENE FAMILY</scope>
    <scope>NOMENCLATURE</scope>
</reference>